<organism>
    <name type="scientific">Marmota himalayana</name>
    <name type="common">Himalayan marmot</name>
    <dbReference type="NCBI Taxonomy" id="93163"/>
    <lineage>
        <taxon>Eukaryota</taxon>
        <taxon>Metazoa</taxon>
        <taxon>Chordata</taxon>
        <taxon>Craniata</taxon>
        <taxon>Vertebrata</taxon>
        <taxon>Euteleostomi</taxon>
        <taxon>Mammalia</taxon>
        <taxon>Eutheria</taxon>
        <taxon>Euarchontoglires</taxon>
        <taxon>Glires</taxon>
        <taxon>Rodentia</taxon>
        <taxon>Sciuromorpha</taxon>
        <taxon>Sciuridae</taxon>
        <taxon>Xerinae</taxon>
        <taxon>Marmotini</taxon>
        <taxon>Marmota</taxon>
    </lineage>
</organism>
<protein>
    <recommendedName>
        <fullName>Cytochrome b</fullName>
    </recommendedName>
    <alternativeName>
        <fullName>Complex III subunit 3</fullName>
    </alternativeName>
    <alternativeName>
        <fullName>Complex III subunit III</fullName>
    </alternativeName>
    <alternativeName>
        <fullName>Cytochrome b-c1 complex subunit 3</fullName>
    </alternativeName>
    <alternativeName>
        <fullName>Ubiquinol-cytochrome-c reductase complex cytochrome b subunit</fullName>
    </alternativeName>
</protein>
<name>CYB_MARHI</name>
<dbReference type="EMBL" id="AF143928">
    <property type="protein sequence ID" value="AAD29735.1"/>
    <property type="molecule type" value="Genomic_DNA"/>
</dbReference>
<dbReference type="SMR" id="Q9XMC2"/>
<dbReference type="GO" id="GO:0005743">
    <property type="term" value="C:mitochondrial inner membrane"/>
    <property type="evidence" value="ECO:0007669"/>
    <property type="project" value="UniProtKB-SubCell"/>
</dbReference>
<dbReference type="GO" id="GO:0045275">
    <property type="term" value="C:respiratory chain complex III"/>
    <property type="evidence" value="ECO:0007669"/>
    <property type="project" value="InterPro"/>
</dbReference>
<dbReference type="GO" id="GO:0046872">
    <property type="term" value="F:metal ion binding"/>
    <property type="evidence" value="ECO:0007669"/>
    <property type="project" value="UniProtKB-KW"/>
</dbReference>
<dbReference type="GO" id="GO:0008121">
    <property type="term" value="F:ubiquinol-cytochrome-c reductase activity"/>
    <property type="evidence" value="ECO:0007669"/>
    <property type="project" value="InterPro"/>
</dbReference>
<dbReference type="GO" id="GO:0006122">
    <property type="term" value="P:mitochondrial electron transport, ubiquinol to cytochrome c"/>
    <property type="evidence" value="ECO:0007669"/>
    <property type="project" value="TreeGrafter"/>
</dbReference>
<dbReference type="CDD" id="cd00290">
    <property type="entry name" value="cytochrome_b_C"/>
    <property type="match status" value="1"/>
</dbReference>
<dbReference type="CDD" id="cd00284">
    <property type="entry name" value="Cytochrome_b_N"/>
    <property type="match status" value="1"/>
</dbReference>
<dbReference type="FunFam" id="1.20.810.10:FF:000002">
    <property type="entry name" value="Cytochrome b"/>
    <property type="match status" value="1"/>
</dbReference>
<dbReference type="Gene3D" id="1.20.810.10">
    <property type="entry name" value="Cytochrome Bc1 Complex, Chain C"/>
    <property type="match status" value="1"/>
</dbReference>
<dbReference type="InterPro" id="IPR005798">
    <property type="entry name" value="Cyt_b/b6_C"/>
</dbReference>
<dbReference type="InterPro" id="IPR036150">
    <property type="entry name" value="Cyt_b/b6_C_sf"/>
</dbReference>
<dbReference type="InterPro" id="IPR005797">
    <property type="entry name" value="Cyt_b/b6_N"/>
</dbReference>
<dbReference type="InterPro" id="IPR027387">
    <property type="entry name" value="Cytb/b6-like_sf"/>
</dbReference>
<dbReference type="InterPro" id="IPR030689">
    <property type="entry name" value="Cytochrome_b"/>
</dbReference>
<dbReference type="InterPro" id="IPR048260">
    <property type="entry name" value="Cytochrome_b_C_euk/bac"/>
</dbReference>
<dbReference type="InterPro" id="IPR048259">
    <property type="entry name" value="Cytochrome_b_N_euk/bac"/>
</dbReference>
<dbReference type="InterPro" id="IPR016174">
    <property type="entry name" value="Di-haem_cyt_TM"/>
</dbReference>
<dbReference type="PANTHER" id="PTHR19271">
    <property type="entry name" value="CYTOCHROME B"/>
    <property type="match status" value="1"/>
</dbReference>
<dbReference type="PANTHER" id="PTHR19271:SF16">
    <property type="entry name" value="CYTOCHROME B"/>
    <property type="match status" value="1"/>
</dbReference>
<dbReference type="Pfam" id="PF00032">
    <property type="entry name" value="Cytochrom_B_C"/>
    <property type="match status" value="1"/>
</dbReference>
<dbReference type="Pfam" id="PF00033">
    <property type="entry name" value="Cytochrome_B"/>
    <property type="match status" value="1"/>
</dbReference>
<dbReference type="PIRSF" id="PIRSF038885">
    <property type="entry name" value="COB"/>
    <property type="match status" value="1"/>
</dbReference>
<dbReference type="SUPFAM" id="SSF81648">
    <property type="entry name" value="a domain/subunit of cytochrome bc1 complex (Ubiquinol-cytochrome c reductase)"/>
    <property type="match status" value="1"/>
</dbReference>
<dbReference type="SUPFAM" id="SSF81342">
    <property type="entry name" value="Transmembrane di-heme cytochromes"/>
    <property type="match status" value="1"/>
</dbReference>
<dbReference type="PROSITE" id="PS51003">
    <property type="entry name" value="CYTB_CTER"/>
    <property type="match status" value="1"/>
</dbReference>
<dbReference type="PROSITE" id="PS51002">
    <property type="entry name" value="CYTB_NTER"/>
    <property type="match status" value="1"/>
</dbReference>
<gene>
    <name type="primary">MT-CYB</name>
    <name type="synonym">COB</name>
    <name type="synonym">CYTB</name>
    <name type="synonym">MTCYB</name>
</gene>
<feature type="chain" id="PRO_0000255068" description="Cytochrome b">
    <location>
        <begin position="1"/>
        <end position="379"/>
    </location>
</feature>
<feature type="transmembrane region" description="Helical" evidence="2">
    <location>
        <begin position="33"/>
        <end position="53"/>
    </location>
</feature>
<feature type="transmembrane region" description="Helical" evidence="2">
    <location>
        <begin position="77"/>
        <end position="98"/>
    </location>
</feature>
<feature type="transmembrane region" description="Helical" evidence="2">
    <location>
        <begin position="113"/>
        <end position="133"/>
    </location>
</feature>
<feature type="transmembrane region" description="Helical" evidence="2">
    <location>
        <begin position="178"/>
        <end position="198"/>
    </location>
</feature>
<feature type="transmembrane region" description="Helical" evidence="2">
    <location>
        <begin position="226"/>
        <end position="246"/>
    </location>
</feature>
<feature type="transmembrane region" description="Helical" evidence="2">
    <location>
        <begin position="288"/>
        <end position="308"/>
    </location>
</feature>
<feature type="transmembrane region" description="Helical" evidence="2">
    <location>
        <begin position="320"/>
        <end position="340"/>
    </location>
</feature>
<feature type="transmembrane region" description="Helical" evidence="2">
    <location>
        <begin position="347"/>
        <end position="367"/>
    </location>
</feature>
<feature type="binding site" description="axial binding residue" evidence="2">
    <location>
        <position position="83"/>
    </location>
    <ligand>
        <name>heme b</name>
        <dbReference type="ChEBI" id="CHEBI:60344"/>
        <label>b562</label>
    </ligand>
    <ligandPart>
        <name>Fe</name>
        <dbReference type="ChEBI" id="CHEBI:18248"/>
    </ligandPart>
</feature>
<feature type="binding site" description="axial binding residue" evidence="2">
    <location>
        <position position="97"/>
    </location>
    <ligand>
        <name>heme b</name>
        <dbReference type="ChEBI" id="CHEBI:60344"/>
        <label>b566</label>
    </ligand>
    <ligandPart>
        <name>Fe</name>
        <dbReference type="ChEBI" id="CHEBI:18248"/>
    </ligandPart>
</feature>
<feature type="binding site" description="axial binding residue" evidence="2">
    <location>
        <position position="182"/>
    </location>
    <ligand>
        <name>heme b</name>
        <dbReference type="ChEBI" id="CHEBI:60344"/>
        <label>b562</label>
    </ligand>
    <ligandPart>
        <name>Fe</name>
        <dbReference type="ChEBI" id="CHEBI:18248"/>
    </ligandPart>
</feature>
<feature type="binding site" description="axial binding residue" evidence="2">
    <location>
        <position position="196"/>
    </location>
    <ligand>
        <name>heme b</name>
        <dbReference type="ChEBI" id="CHEBI:60344"/>
        <label>b566</label>
    </ligand>
    <ligandPart>
        <name>Fe</name>
        <dbReference type="ChEBI" id="CHEBI:18248"/>
    </ligandPart>
</feature>
<feature type="binding site" evidence="2">
    <location>
        <position position="201"/>
    </location>
    <ligand>
        <name>a ubiquinone</name>
        <dbReference type="ChEBI" id="CHEBI:16389"/>
    </ligand>
</feature>
<proteinExistence type="inferred from homology"/>
<keyword id="KW-0249">Electron transport</keyword>
<keyword id="KW-0349">Heme</keyword>
<keyword id="KW-0408">Iron</keyword>
<keyword id="KW-0472">Membrane</keyword>
<keyword id="KW-0479">Metal-binding</keyword>
<keyword id="KW-0496">Mitochondrion</keyword>
<keyword id="KW-0999">Mitochondrion inner membrane</keyword>
<keyword id="KW-0679">Respiratory chain</keyword>
<keyword id="KW-0812">Transmembrane</keyword>
<keyword id="KW-1133">Transmembrane helix</keyword>
<keyword id="KW-0813">Transport</keyword>
<keyword id="KW-0830">Ubiquinone</keyword>
<reference key="1">
    <citation type="journal article" date="1999" name="Syst. Biol.">
        <title>Molecular phylogeny of the marmots (Rodentia: Sciuridae): tests of evolutionary and biogeographic hypotheses.</title>
        <authorList>
            <person name="Steppan S.J."/>
            <person name="Akhverdyan M.R."/>
            <person name="Lyapunova E.A."/>
            <person name="Fraser D.G."/>
            <person name="Vorontsov N.N."/>
            <person name="Hoffmann R.S."/>
            <person name="Braun M.J."/>
        </authorList>
    </citation>
    <scope>NUCLEOTIDE SEQUENCE [GENOMIC DNA]</scope>
</reference>
<geneLocation type="mitochondrion"/>
<comment type="function">
    <text evidence="2">Component of the ubiquinol-cytochrome c reductase complex (complex III or cytochrome b-c1 complex) that is part of the mitochondrial respiratory chain. The b-c1 complex mediates electron transfer from ubiquinol to cytochrome c. Contributes to the generation of a proton gradient across the mitochondrial membrane that is then used for ATP synthesis.</text>
</comment>
<comment type="cofactor">
    <cofactor evidence="2">
        <name>heme b</name>
        <dbReference type="ChEBI" id="CHEBI:60344"/>
    </cofactor>
    <text evidence="2">Binds 2 heme b groups non-covalently.</text>
</comment>
<comment type="subunit">
    <text evidence="2">The cytochrome bc1 complex contains 11 subunits: 3 respiratory subunits (MT-CYB, CYC1 and UQCRFS1), 2 core proteins (UQCRC1 and UQCRC2) and 6 low-molecular weight proteins (UQCRH/QCR6, UQCRB/QCR7, UQCRQ/QCR8, UQCR10/QCR9, UQCR11/QCR10 and a cleavage product of UQCRFS1). This cytochrome bc1 complex then forms a dimer.</text>
</comment>
<comment type="subcellular location">
    <subcellularLocation>
        <location evidence="2">Mitochondrion inner membrane</location>
        <topology evidence="2">Multi-pass membrane protein</topology>
    </subcellularLocation>
</comment>
<comment type="miscellaneous">
    <text evidence="1">Heme 1 (or BL or b562) is low-potential and absorbs at about 562 nm, and heme 2 (or BH or b566) is high-potential and absorbs at about 566 nm.</text>
</comment>
<comment type="similarity">
    <text evidence="3 4">Belongs to the cytochrome b family.</text>
</comment>
<comment type="caution">
    <text evidence="2">The full-length protein contains only eight transmembrane helices, not nine as predicted by bioinformatics tools.</text>
</comment>
<sequence length="379" mass="42910">MTNIRKTHPLIKMINHSFIDLPTPSNISTWWNFGSLLGLCLAIQILTGLFLAMHYTSDTITAFSSVTHICRDVNYGWLIRYIHANGASMFFICLFLHVGRGVYYGSYTYFETWNIGVILLLTVMATAFMGYVLPWGQMSFWGATVITNLLSAIPYIGTTLVEWIWGGFSVDKATLTRFFAFHFILPFIIAALAMVHLLFLHETGSNNPSGLISDSDKIPFHPYYTIKDILGVLLLISILMILVLFSPDLLGDPDNYTPANPLSTPPHIKPEWYFLFAYAILRSIPNKLGGVLALVFSILILMLFPLLHLSKQRSMMFRPLSQCVFWILVADLITLTWIGGQPVEYPYIIIGQLASILYFTIILLILPIISLIENKLLKW</sequence>
<evidence type="ECO:0000250" key="1"/>
<evidence type="ECO:0000250" key="2">
    <source>
        <dbReference type="UniProtKB" id="P00157"/>
    </source>
</evidence>
<evidence type="ECO:0000255" key="3">
    <source>
        <dbReference type="PROSITE-ProRule" id="PRU00967"/>
    </source>
</evidence>
<evidence type="ECO:0000255" key="4">
    <source>
        <dbReference type="PROSITE-ProRule" id="PRU00968"/>
    </source>
</evidence>
<accession>Q9XMC2</accession>